<evidence type="ECO:0000250" key="1"/>
<evidence type="ECO:0000255" key="2">
    <source>
        <dbReference type="HAMAP-Rule" id="MF_00860"/>
    </source>
</evidence>
<dbReference type="EMBL" id="X13974">
    <property type="protein sequence ID" value="CAA32152.1"/>
    <property type="molecule type" value="mRNA"/>
</dbReference>
<dbReference type="PIR" id="S10257">
    <property type="entry name" value="S10257"/>
</dbReference>
<dbReference type="SMR" id="P17537"/>
<dbReference type="GO" id="GO:0009507">
    <property type="term" value="C:chloroplast"/>
    <property type="evidence" value="ECO:0007669"/>
    <property type="project" value="UniProtKB-SubCell"/>
</dbReference>
<dbReference type="GO" id="GO:0016984">
    <property type="term" value="F:ribulose-bisphosphate carboxylase activity"/>
    <property type="evidence" value="ECO:0007669"/>
    <property type="project" value="UniProtKB-UniRule"/>
</dbReference>
<dbReference type="GO" id="GO:0009853">
    <property type="term" value="P:photorespiration"/>
    <property type="evidence" value="ECO:0007669"/>
    <property type="project" value="UniProtKB-KW"/>
</dbReference>
<dbReference type="GO" id="GO:0019253">
    <property type="term" value="P:reductive pentose-phosphate cycle"/>
    <property type="evidence" value="ECO:0007669"/>
    <property type="project" value="UniProtKB-UniRule"/>
</dbReference>
<dbReference type="CDD" id="cd03527">
    <property type="entry name" value="RuBisCO_small"/>
    <property type="match status" value="1"/>
</dbReference>
<dbReference type="FunFam" id="3.30.190.10:FF:000001">
    <property type="entry name" value="Ribulose bisphosphate carboxylase small chain, chloroplastic"/>
    <property type="match status" value="1"/>
</dbReference>
<dbReference type="Gene3D" id="3.30.190.10">
    <property type="entry name" value="Ribulose bisphosphate carboxylase, small subunit"/>
    <property type="match status" value="1"/>
</dbReference>
<dbReference type="HAMAP" id="MF_00859">
    <property type="entry name" value="RuBisCO_S_bact"/>
    <property type="match status" value="1"/>
</dbReference>
<dbReference type="InterPro" id="IPR024681">
    <property type="entry name" value="RuBisCO_ssu"/>
</dbReference>
<dbReference type="InterPro" id="IPR000894">
    <property type="entry name" value="RuBisCO_ssu_dom"/>
</dbReference>
<dbReference type="InterPro" id="IPR036385">
    <property type="entry name" value="RuBisCO_ssu_sf"/>
</dbReference>
<dbReference type="PANTHER" id="PTHR31262">
    <property type="entry name" value="RIBULOSE BISPHOSPHATE CARBOXYLASE SMALL CHAIN 1, CHLOROPLASTIC"/>
    <property type="match status" value="1"/>
</dbReference>
<dbReference type="PANTHER" id="PTHR31262:SF0">
    <property type="entry name" value="RIBULOSE BISPHOSPHATE CARBOXYLASE SMALL SUBUNIT, CHLOROPLASTIC 1"/>
    <property type="match status" value="1"/>
</dbReference>
<dbReference type="Pfam" id="PF00101">
    <property type="entry name" value="RuBisCO_small"/>
    <property type="match status" value="1"/>
</dbReference>
<dbReference type="PRINTS" id="PR00152">
    <property type="entry name" value="RUBISCOSMALL"/>
</dbReference>
<dbReference type="SMART" id="SM00961">
    <property type="entry name" value="RuBisCO_small"/>
    <property type="match status" value="1"/>
</dbReference>
<dbReference type="SUPFAM" id="SSF55239">
    <property type="entry name" value="RuBisCO, small subunit"/>
    <property type="match status" value="1"/>
</dbReference>
<keyword id="KW-0113">Calvin cycle</keyword>
<keyword id="KW-0120">Carbon dioxide fixation</keyword>
<keyword id="KW-0150">Chloroplast</keyword>
<keyword id="KW-0601">Photorespiration</keyword>
<keyword id="KW-0602">Photosynthesis</keyword>
<keyword id="KW-0934">Plastid</keyword>
<keyword id="KW-0809">Transit peptide</keyword>
<organism>
    <name type="scientific">Chlamydomonas moewusii</name>
    <name type="common">Chlamydomonas eugametos</name>
    <dbReference type="NCBI Taxonomy" id="3054"/>
    <lineage>
        <taxon>Eukaryota</taxon>
        <taxon>Viridiplantae</taxon>
        <taxon>Chlorophyta</taxon>
        <taxon>core chlorophytes</taxon>
        <taxon>Chlorophyceae</taxon>
        <taxon>CS clade</taxon>
        <taxon>Chlamydomonadales</taxon>
        <taxon>Chlamydomonadaceae</taxon>
        <taxon>Chlamydomonas</taxon>
    </lineage>
</organism>
<feature type="transit peptide" description="Chloroplast" evidence="1">
    <location>
        <begin position="1"/>
        <end position="28"/>
    </location>
</feature>
<feature type="chain" id="PRO_0000031474" description="Ribulose bisphosphate carboxylase small subunit, chloroplastic">
    <location>
        <begin position="29"/>
        <end position="168"/>
    </location>
</feature>
<reference key="1">
    <citation type="journal article" date="1988" name="Curr. Genet.">
        <title>Cloning and sequencing of a cDNA encoding the small subunit precursor of ribulose-1,5-bisphosphate carboxylase from Chlamydomonas moewusii. Evolution of RUBISCO SS polypeptide.</title>
        <authorList>
            <person name="Simard C."/>
            <person name="Lemieux C."/>
            <person name="Bellamere G."/>
        </authorList>
    </citation>
    <scope>NUCLEOTIDE SEQUENCE [MRNA]</scope>
</reference>
<sequence length="168" mass="18908">MASIAAKSVSLRAATRRAAPVAAPADARFKVWQPVNNKQYETFSYLPPLTNQKIGRQVDYIINNGWTPCLEFADPSTSFVSNANAVRLQGVSAGYYDNRYWTMWKLPMFGCTDPSQVLREVSACQVAFPNVYIRLVAFDNVKQVQCMGFLVQRPRNAAEYCPLEKRSV</sequence>
<proteinExistence type="evidence at transcript level"/>
<gene>
    <name evidence="2" type="primary">RBCS</name>
</gene>
<name>RBS_CHLMO</name>
<accession>P17537</accession>
<comment type="function">
    <text evidence="2">RuBisCO catalyzes two reactions: the carboxylation of D-ribulose 1,5-bisphosphate, the primary event in carbon dioxide fixation, as well as the oxidative fragmentation of the pentose substrate. Both reactions occur simultaneously and in competition at the same active site. Although the small subunit is not catalytic it is essential for maximal activity.</text>
</comment>
<comment type="subunit">
    <text evidence="2">Heterohexadecamer of 8 large and 8 small subunits.</text>
</comment>
<comment type="subcellular location">
    <subcellularLocation>
        <location evidence="2">Plastid</location>
        <location evidence="2">Chloroplast</location>
    </subcellularLocation>
</comment>
<comment type="miscellaneous">
    <text evidence="2">The basic functional RuBisCO is composed of a large chain homodimer in a 'head-to-tail' conformation. In form I RuBisCO this homodimer is arranged in a barrel-like tetramer with the small subunits forming a tetrameric 'cap' on each end of the 'barrel'.</text>
</comment>
<comment type="similarity">
    <text evidence="2">Belongs to the RuBisCO small chain family.</text>
</comment>
<protein>
    <recommendedName>
        <fullName evidence="2">Ribulose bisphosphate carboxylase small subunit, chloroplastic</fullName>
        <shortName evidence="2">RuBisCO small subunit</shortName>
    </recommendedName>
</protein>